<proteinExistence type="inferred from homology"/>
<organism>
    <name type="scientific">Desulforapulum autotrophicum (strain ATCC 43914 / DSM 3382 / VKM B-1955 / HRM2)</name>
    <name type="common">Desulfobacterium autotrophicum</name>
    <dbReference type="NCBI Taxonomy" id="177437"/>
    <lineage>
        <taxon>Bacteria</taxon>
        <taxon>Pseudomonadati</taxon>
        <taxon>Thermodesulfobacteriota</taxon>
        <taxon>Desulfobacteria</taxon>
        <taxon>Desulfobacterales</taxon>
        <taxon>Desulfobacteraceae</taxon>
        <taxon>Desulforapulum</taxon>
    </lineage>
</organism>
<feature type="chain" id="PRO_0000412864" description="Sec-independent protein translocase protein TatC">
    <location>
        <begin position="1"/>
        <end position="270"/>
    </location>
</feature>
<feature type="transmembrane region" description="Helical" evidence="1">
    <location>
        <begin position="25"/>
        <end position="45"/>
    </location>
</feature>
<feature type="transmembrane region" description="Helical" evidence="1">
    <location>
        <begin position="75"/>
        <end position="95"/>
    </location>
</feature>
<feature type="transmembrane region" description="Helical" evidence="1">
    <location>
        <begin position="111"/>
        <end position="131"/>
    </location>
</feature>
<feature type="transmembrane region" description="Helical" evidence="1">
    <location>
        <begin position="156"/>
        <end position="176"/>
    </location>
</feature>
<feature type="transmembrane region" description="Helical" evidence="1">
    <location>
        <begin position="195"/>
        <end position="211"/>
    </location>
</feature>
<feature type="transmembrane region" description="Helical" evidence="1">
    <location>
        <begin position="213"/>
        <end position="233"/>
    </location>
</feature>
<feature type="region of interest" description="Disordered" evidence="2">
    <location>
        <begin position="243"/>
        <end position="270"/>
    </location>
</feature>
<name>TATC_DESAH</name>
<protein>
    <recommendedName>
        <fullName evidence="1">Sec-independent protein translocase protein TatC</fullName>
    </recommendedName>
</protein>
<dbReference type="EMBL" id="CP001087">
    <property type="protein sequence ID" value="ACN17291.1"/>
    <property type="molecule type" value="Genomic_DNA"/>
</dbReference>
<dbReference type="RefSeq" id="WP_015906023.1">
    <property type="nucleotide sequence ID" value="NC_012108.1"/>
</dbReference>
<dbReference type="SMR" id="C0QD59"/>
<dbReference type="STRING" id="177437.HRM2_42350"/>
<dbReference type="KEGG" id="dat:HRM2_42350"/>
<dbReference type="eggNOG" id="COG0805">
    <property type="taxonomic scope" value="Bacteria"/>
</dbReference>
<dbReference type="HOGENOM" id="CLU_031942_3_3_7"/>
<dbReference type="OrthoDB" id="9777044at2"/>
<dbReference type="Proteomes" id="UP000000442">
    <property type="component" value="Chromosome"/>
</dbReference>
<dbReference type="GO" id="GO:0033281">
    <property type="term" value="C:TAT protein transport complex"/>
    <property type="evidence" value="ECO:0007669"/>
    <property type="project" value="UniProtKB-UniRule"/>
</dbReference>
<dbReference type="GO" id="GO:0009977">
    <property type="term" value="F:proton motive force dependent protein transmembrane transporter activity"/>
    <property type="evidence" value="ECO:0007669"/>
    <property type="project" value="TreeGrafter"/>
</dbReference>
<dbReference type="GO" id="GO:0065002">
    <property type="term" value="P:intracellular protein transmembrane transport"/>
    <property type="evidence" value="ECO:0007669"/>
    <property type="project" value="TreeGrafter"/>
</dbReference>
<dbReference type="GO" id="GO:0043953">
    <property type="term" value="P:protein transport by the Tat complex"/>
    <property type="evidence" value="ECO:0007669"/>
    <property type="project" value="UniProtKB-UniRule"/>
</dbReference>
<dbReference type="HAMAP" id="MF_00902">
    <property type="entry name" value="TatC"/>
    <property type="match status" value="1"/>
</dbReference>
<dbReference type="InterPro" id="IPR002033">
    <property type="entry name" value="TatC"/>
</dbReference>
<dbReference type="NCBIfam" id="TIGR00945">
    <property type="entry name" value="tatC"/>
    <property type="match status" value="1"/>
</dbReference>
<dbReference type="PANTHER" id="PTHR30371">
    <property type="entry name" value="SEC-INDEPENDENT PROTEIN TRANSLOCASE PROTEIN TATC"/>
    <property type="match status" value="1"/>
</dbReference>
<dbReference type="PANTHER" id="PTHR30371:SF0">
    <property type="entry name" value="SEC-INDEPENDENT PROTEIN TRANSLOCASE PROTEIN TATC, CHLOROPLASTIC-RELATED"/>
    <property type="match status" value="1"/>
</dbReference>
<dbReference type="Pfam" id="PF00902">
    <property type="entry name" value="TatC"/>
    <property type="match status" value="1"/>
</dbReference>
<dbReference type="PRINTS" id="PR01840">
    <property type="entry name" value="TATCFAMILY"/>
</dbReference>
<reference key="1">
    <citation type="journal article" date="2009" name="Environ. Microbiol.">
        <title>Genome sequence of Desulfobacterium autotrophicum HRM2, a marine sulfate reducer oxidizing organic carbon completely to carbon dioxide.</title>
        <authorList>
            <person name="Strittmatter A.W."/>
            <person name="Liesegang H."/>
            <person name="Rabus R."/>
            <person name="Decker I."/>
            <person name="Amann J."/>
            <person name="Andres S."/>
            <person name="Henne A."/>
            <person name="Fricke W.F."/>
            <person name="Martinez-Arias R."/>
            <person name="Bartels D."/>
            <person name="Goesmann A."/>
            <person name="Krause L."/>
            <person name="Puehler A."/>
            <person name="Klenk H.P."/>
            <person name="Richter M."/>
            <person name="Schuler M."/>
            <person name="Gloeckner F.O."/>
            <person name="Meyerdierks A."/>
            <person name="Gottschalk G."/>
            <person name="Amann R."/>
        </authorList>
    </citation>
    <scope>NUCLEOTIDE SEQUENCE [LARGE SCALE GENOMIC DNA]</scope>
    <source>
        <strain>ATCC 43914 / DSM 3382 / VKM B-1955 / HRM2</strain>
    </source>
</reference>
<evidence type="ECO:0000255" key="1">
    <source>
        <dbReference type="HAMAP-Rule" id="MF_00902"/>
    </source>
</evidence>
<evidence type="ECO:0000256" key="2">
    <source>
        <dbReference type="SAM" id="MobiDB-lite"/>
    </source>
</evidence>
<accession>C0QD59</accession>
<gene>
    <name evidence="1" type="primary">tatC</name>
    <name type="ordered locus">HRM2_42350</name>
</gene>
<keyword id="KW-0997">Cell inner membrane</keyword>
<keyword id="KW-1003">Cell membrane</keyword>
<keyword id="KW-0472">Membrane</keyword>
<keyword id="KW-0653">Protein transport</keyword>
<keyword id="KW-1185">Reference proteome</keyword>
<keyword id="KW-0811">Translocation</keyword>
<keyword id="KW-0812">Transmembrane</keyword>
<keyword id="KW-1133">Transmembrane helix</keyword>
<keyword id="KW-0813">Transport</keyword>
<sequence length="270" mass="30491">MSREEEKSPFTEHLGELRDRLVRSFIAVGVGFVIAYCFKERLFDILTAPLIAAMGEGQKMIFTGLPEAFFTYLKVSLLTGVILATPVLFYEFWMFVSPGLYRKEKRFVLPVVILSIFFFCVGSSFGYFIVFPYGFQFFLGFSSDTIQAMPSMKEYLGFASKMLLAFGFVFELPLVLTFMARMGLVSVEFLKKNRKYAILIFFTGAALITPPDVVTQIMMAIPLMILYEISIIGARVFGKKKDSDEEEAAENSDVQTDKSTDDTTPGEDQN</sequence>
<comment type="function">
    <text evidence="1">Part of the twin-arginine translocation (Tat) system that transports large folded proteins containing a characteristic twin-arginine motif in their signal peptide across membranes. Together with TatB, TatC is part of a receptor directly interacting with Tat signal peptides.</text>
</comment>
<comment type="subunit">
    <text evidence="1">The Tat system comprises two distinct complexes: a TatABC complex, containing multiple copies of TatA, TatB and TatC subunits, and a separate TatA complex, containing only TatA subunits. Substrates initially bind to the TatABC complex, which probably triggers association of the separate TatA complex to form the active translocon.</text>
</comment>
<comment type="subcellular location">
    <subcellularLocation>
        <location evidence="1">Cell inner membrane</location>
        <topology evidence="1">Multi-pass membrane protein</topology>
    </subcellularLocation>
</comment>
<comment type="similarity">
    <text evidence="1">Belongs to the TatC family.</text>
</comment>